<accession>F9FAJ9</accession>
<name>OXEAS_FUSOF</name>
<gene>
    <name type="ORF">FOXB_03425</name>
</gene>
<protein>
    <recommendedName>
        <fullName evidence="7">Bifunctional dioxygenase (DOX)-epoxy alcohol synthase (EAS)</fullName>
        <shortName evidence="7">10R-DOX-EAS</shortName>
    </recommendedName>
    <domain>
        <recommendedName>
            <fullName evidence="7">Fatty acid alpha-dioxygenase</fullName>
            <shortName evidence="7">DOX</shortName>
            <ecNumber evidence="6">1.13.11.-</ecNumber>
            <ecNumber evidence="6">1.13.11.62</ecNumber>
        </recommendedName>
    </domain>
    <domain>
        <recommendedName>
            <fullName evidence="7">Epoxy alcohol synthase</fullName>
            <shortName evidence="7">EAS</shortName>
            <ecNumber evidence="6">1.-.-.-</ecNumber>
        </recommendedName>
        <alternativeName>
            <fullName evidence="7">Cytochrome P450 monooxygenase</fullName>
            <shortName evidence="7">CYP</shortName>
        </alternativeName>
    </domain>
</protein>
<evidence type="ECO:0000250" key="1">
    <source>
        <dbReference type="UniProtKB" id="P04798"/>
    </source>
</evidence>
<evidence type="ECO:0000250" key="2">
    <source>
        <dbReference type="UniProtKB" id="Q9UUS2"/>
    </source>
</evidence>
<evidence type="ECO:0000255" key="3"/>
<evidence type="ECO:0000255" key="4">
    <source>
        <dbReference type="PROSITE-ProRule" id="PRU00298"/>
    </source>
</evidence>
<evidence type="ECO:0000256" key="5">
    <source>
        <dbReference type="SAM" id="MobiDB-lite"/>
    </source>
</evidence>
<evidence type="ECO:0000269" key="6">
    <source>
    </source>
</evidence>
<evidence type="ECO:0000303" key="7">
    <source>
    </source>
</evidence>
<evidence type="ECO:0000305" key="8"/>
<feature type="chain" id="PRO_0000458151" description="Bifunctional dioxygenase (DOX)-epoxy alcohol synthase (EAS)">
    <location>
        <begin position="1"/>
        <end position="1283"/>
    </location>
</feature>
<feature type="region of interest" description="Disordered" evidence="5">
    <location>
        <begin position="1"/>
        <end position="64"/>
    </location>
</feature>
<feature type="region of interest" description="Fatty acid alpha-dioxygenase" evidence="7">
    <location>
        <begin position="130"/>
        <end position="476"/>
    </location>
</feature>
<feature type="region of interest" description="Epoxy alcohol synthase" evidence="7">
    <location>
        <begin position="684"/>
        <end position="1108"/>
    </location>
</feature>
<feature type="active site" evidence="3">
    <location>
        <position position="405"/>
    </location>
</feature>
<feature type="binding site" description="axial binding residue" evidence="4">
    <location>
        <position position="227"/>
    </location>
    <ligand>
        <name>heme b</name>
        <dbReference type="ChEBI" id="CHEBI:60344"/>
    </ligand>
    <ligandPart>
        <name>Fe</name>
        <dbReference type="ChEBI" id="CHEBI:18248"/>
    </ligandPart>
</feature>
<feature type="binding site" description="axial binding residue" evidence="4">
    <location>
        <position position="408"/>
    </location>
    <ligand>
        <name>heme b</name>
        <dbReference type="ChEBI" id="CHEBI:60344"/>
    </ligand>
    <ligandPart>
        <name>Fe</name>
        <dbReference type="ChEBI" id="CHEBI:18248"/>
    </ligandPart>
</feature>
<feature type="binding site" description="axial binding residue" evidence="1">
    <location>
        <position position="1035"/>
    </location>
    <ligand>
        <name>heme</name>
        <dbReference type="ChEBI" id="CHEBI:30413"/>
    </ligand>
    <ligandPart>
        <name>Fe</name>
        <dbReference type="ChEBI" id="CHEBI:18248"/>
    </ligandPart>
</feature>
<proteinExistence type="evidence at protein level"/>
<reference key="1">
    <citation type="journal article" date="2012" name="Mol. Plant Microbe Interact.">
        <title>A highly conserved effector in Fusarium oxysporum is required for full virulence on Arabidopsis.</title>
        <authorList>
            <person name="Thatcher L.F."/>
            <person name="Gardiner D.M."/>
            <person name="Kazan K."/>
            <person name="Manners J."/>
        </authorList>
    </citation>
    <scope>NUCLEOTIDE SEQUENCE [LARGE SCALE GENOMIC DNA]</scope>
    <source>
        <strain>Fo5176</strain>
    </source>
</reference>
<reference key="2">
    <citation type="journal article" date="2014" name="J. Lipid Res.">
        <title>Epoxy alcohol synthase of the rice blast fungus represents a novel subfamily of dioxygenase-cytochrome P450 fusion enzymes.</title>
        <authorList>
            <person name="Hoffmann I."/>
            <person name="Jerneren F."/>
            <person name="Oliw E.H."/>
        </authorList>
    </citation>
    <scope>FUNCTION</scope>
    <scope>DOMAIN</scope>
    <scope>CATALYTIC ACTIVITY</scope>
</reference>
<sequence length="1283" mass="144297">MAEHKNGVATNGYEKKSSPASSSTKSEAKPLPNGDKKDGIVKSFKQLRVASKRPLPKEMGDGSYRVVENRPGLKQDIRRLRGRDLKTLLEIVKAKVKGETQQDDKTMIMERTIQLVANLSDHSKVQESLTNSFISQLWNSIDHPPMLYMGDKFRFRQPDGSNNNPYLPQLGAARTPYSRTVRPKGMSLGAQPDPEAIFESVFARDAFRKNPNNVSSILWYWATIIIHDLFWTNLQDPNQNDSSSYLDLAPLYGSTEKDRDSIRTFKDGQLKPDCFADKRLIGNPPGVPILLIMFNRFHNHVATNLADINEGGRFSKPAEHLSPEAADAAWKKRDTELFETARLVTSGLYINITLIDYVRNIINLNRVDTTWTLDPRQEMGVSVGTKDLSESGTGNVVSAEFNLCYRWHSCLSEMDDKWVQDFYTELLGENYGPMNLQTMMKALKAFEASVADEPSERTFGGFKRGPDGKFNDDELVEALATAIEQPGGAFGGRNVPRIMKPIEMLGIMRGRKWNLAGLNEFRKHFGLKAYETFEDINSDPSVADALRNLYQHPDYVELYPGIVAEEAKTPMVPGVGIAPTYTISRVVLSDAVALVRGDRYYTTDYNPRHLTNWGYKEVDYDLKVNHGCVFYKLFLRAFPQHFKGNSVYAHYPMVIPSENKKILTNIKRADRFDFSRPEPTATRINIIGYNAAKYILEDQQKYRVCWEEGLKHLMGEAGGRFMLSGDTALHAQQRKCMGKLLYNDTWRNAVKSFYATTAEKLLAEKSYRLAGKMQVDVVRDVGNVAHTHFVARMFNLPLKTSENPKGVFSEQELYMILAVIFVCIFFDIDPAKSFPLRQGAREVAQKLGGIIEMNVKLANSIGVKGLFTSKPDKNDDPLARYGENMAKGLKKAGLSTEDIVWSQILPTAGAMVPNQAQVFAQTLDWYLSPAGEKYRPELARIAALETGDETDALLLGYAMEGIRMAGTFGLYREATGPDTIHEDDGRSIPVNAGDRVFVSFVQAAQDPKIFPNPGVVDPKRPLDKYIHYGVGPHACLGRDISQVALTELFRAVFRKKGVRRVPGAQGELKKVPRPGGFFVYMTEDWGSIWPFPTSMKITWDDGCGTDLFTLLFWCRSVPWWDLLPETTQAAPFIISSFQSQQIYSPAEIAAVLALMAFESGDFQYKRNHYPGRPGQGTANMQMPNYNLLYAKSIPELAKGWQGIESVEGLSDQELGDLLDDVTVDKYNFGSGPWFLKTQCKEDVRQAFKTDVDTGFQKYIEECVGTDLQPRLEYFQRAKTAFGL</sequence>
<keyword id="KW-0223">Dioxygenase</keyword>
<keyword id="KW-0349">Heme</keyword>
<keyword id="KW-0408">Iron</keyword>
<keyword id="KW-0479">Metal-binding</keyword>
<keyword id="KW-0560">Oxidoreductase</keyword>
<keyword id="KW-1185">Reference proteome</keyword>
<organism>
    <name type="scientific">Fusarium oxysporum (strain Fo5176)</name>
    <name type="common">Fusarium vascular wilt</name>
    <dbReference type="NCBI Taxonomy" id="660025"/>
    <lineage>
        <taxon>Eukaryota</taxon>
        <taxon>Fungi</taxon>
        <taxon>Dikarya</taxon>
        <taxon>Ascomycota</taxon>
        <taxon>Pezizomycotina</taxon>
        <taxon>Sordariomycetes</taxon>
        <taxon>Hypocreomycetidae</taxon>
        <taxon>Hypocreales</taxon>
        <taxon>Nectriaceae</taxon>
        <taxon>Fusarium</taxon>
        <taxon>Fusarium oxysporum species complex</taxon>
    </lineage>
</organism>
<comment type="function">
    <text evidence="6">Bifunctional dioxygenase (DOX)-epoxy alcohol synthase (EAS) that converts linoleic acid (18:2n-6) sequentially to 10(R)-hydroperoxy-8(E),12(Z)-octadecadienoic acid (10R-HPODE) and 10R-HPODE further to 12(13)-epoxy-10-hydroxy-8(E)-octa-decenoic acid as the end product (PubMed:25121983). Linoleic acid is oxidized mainly to the R stereoisomer of 10-HPODE (PubMed:25121983). The dioxygenase domain is also able to oygenate position C-8 of linoleic acid to produce 8(R)-hydroperoxy-8(E),12(Z)-octadecadienoic acid (8R-HPODE) (PubMed:25121983).</text>
</comment>
<comment type="catalytic activity">
    <reaction evidence="6">
        <text>(9Z,12Z)-octadecadienoate + O2 = (8E,10R,12Z)-10-hydroperoxyoctadeca-8,12-dienoate</text>
        <dbReference type="Rhea" id="RHEA:31695"/>
        <dbReference type="ChEBI" id="CHEBI:15379"/>
        <dbReference type="ChEBI" id="CHEBI:30245"/>
        <dbReference type="ChEBI" id="CHEBI:63324"/>
        <dbReference type="EC" id="1.13.11.62"/>
    </reaction>
    <physiologicalReaction direction="left-to-right" evidence="6">
        <dbReference type="Rhea" id="RHEA:31696"/>
    </physiologicalReaction>
</comment>
<comment type="catalytic activity">
    <reaction evidence="6">
        <text>(8E,10R,12Z)-10-hydroperoxyoctadeca-8,12-dienoate = (12S,13R)-epoxy-(10R)-hydroxy-(8E)-octadecenoate</text>
        <dbReference type="Rhea" id="RHEA:75639"/>
        <dbReference type="ChEBI" id="CHEBI:63324"/>
        <dbReference type="ChEBI" id="CHEBI:194375"/>
    </reaction>
    <physiologicalReaction direction="left-to-right" evidence="6">
        <dbReference type="Rhea" id="RHEA:75640"/>
    </physiologicalReaction>
</comment>
<comment type="catalytic activity">
    <reaction evidence="6">
        <text>(9Z)-octadecenoate + O2 = (8R)-hydroperoxy-(9Z)-octadecenoate</text>
        <dbReference type="Rhea" id="RHEA:75655"/>
        <dbReference type="ChEBI" id="CHEBI:15379"/>
        <dbReference type="ChEBI" id="CHEBI:30823"/>
        <dbReference type="ChEBI" id="CHEBI:194403"/>
    </reaction>
    <physiologicalReaction direction="left-to-right" evidence="6">
        <dbReference type="Rhea" id="RHEA:75656"/>
    </physiologicalReaction>
</comment>
<comment type="cofactor">
    <cofactor evidence="4">
        <name>heme b</name>
        <dbReference type="ChEBI" id="CHEBI:60344"/>
    </cofactor>
</comment>
<comment type="cofactor">
    <cofactor evidence="1">
        <name>heme</name>
        <dbReference type="ChEBI" id="CHEBI:30413"/>
    </cofactor>
</comment>
<comment type="subunit">
    <text evidence="2">Homotetramer.</text>
</comment>
<comment type="similarity">
    <text evidence="4">In the N-terminal section; belongs to the peroxidase family.</text>
</comment>
<comment type="similarity">
    <text evidence="8">In the C-terminal section; belongs to the cytochrome P450 family.</text>
</comment>
<dbReference type="EC" id="1.13.11.-" evidence="6"/>
<dbReference type="EC" id="1.13.11.62" evidence="6"/>
<dbReference type="EC" id="1.-.-.-" evidence="6"/>
<dbReference type="EMBL" id="AFQF01001205">
    <property type="protein sequence ID" value="EGU86021.1"/>
    <property type="molecule type" value="Genomic_DNA"/>
</dbReference>
<dbReference type="SMR" id="F9FAJ9"/>
<dbReference type="STRING" id="660025.F9FAJ9"/>
<dbReference type="PaxDb" id="5507-FOXG_12909P0"/>
<dbReference type="OrthoDB" id="21194at110618"/>
<dbReference type="Proteomes" id="UP000002489">
    <property type="component" value="Unplaced"/>
</dbReference>
<dbReference type="GO" id="GO:0051213">
    <property type="term" value="F:dioxygenase activity"/>
    <property type="evidence" value="ECO:0007669"/>
    <property type="project" value="UniProtKB-KW"/>
</dbReference>
<dbReference type="GO" id="GO:0020037">
    <property type="term" value="F:heme binding"/>
    <property type="evidence" value="ECO:0007669"/>
    <property type="project" value="InterPro"/>
</dbReference>
<dbReference type="GO" id="GO:0005506">
    <property type="term" value="F:iron ion binding"/>
    <property type="evidence" value="ECO:0007669"/>
    <property type="project" value="InterPro"/>
</dbReference>
<dbReference type="GO" id="GO:0004497">
    <property type="term" value="F:monooxygenase activity"/>
    <property type="evidence" value="ECO:0007669"/>
    <property type="project" value="InterPro"/>
</dbReference>
<dbReference type="GO" id="GO:0016705">
    <property type="term" value="F:oxidoreductase activity, acting on paired donors, with incorporation or reduction of molecular oxygen"/>
    <property type="evidence" value="ECO:0007669"/>
    <property type="project" value="InterPro"/>
</dbReference>
<dbReference type="GO" id="GO:0004601">
    <property type="term" value="F:peroxidase activity"/>
    <property type="evidence" value="ECO:0007669"/>
    <property type="project" value="InterPro"/>
</dbReference>
<dbReference type="GO" id="GO:0006631">
    <property type="term" value="P:fatty acid metabolic process"/>
    <property type="evidence" value="ECO:0007669"/>
    <property type="project" value="UniProtKB-ARBA"/>
</dbReference>
<dbReference type="GO" id="GO:0006979">
    <property type="term" value="P:response to oxidative stress"/>
    <property type="evidence" value="ECO:0007669"/>
    <property type="project" value="InterPro"/>
</dbReference>
<dbReference type="CDD" id="cd20612">
    <property type="entry name" value="CYP_LDS-like_C"/>
    <property type="match status" value="1"/>
</dbReference>
<dbReference type="CDD" id="cd09817">
    <property type="entry name" value="linoleate_diol_synthase_like"/>
    <property type="match status" value="1"/>
</dbReference>
<dbReference type="Gene3D" id="1.10.630.10">
    <property type="entry name" value="Cytochrome P450"/>
    <property type="match status" value="1"/>
</dbReference>
<dbReference type="Gene3D" id="1.10.640.10">
    <property type="entry name" value="Haem peroxidase domain superfamily, animal type"/>
    <property type="match status" value="1"/>
</dbReference>
<dbReference type="InterPro" id="IPR001128">
    <property type="entry name" value="Cyt_P450"/>
</dbReference>
<dbReference type="InterPro" id="IPR036396">
    <property type="entry name" value="Cyt_P450_sf"/>
</dbReference>
<dbReference type="InterPro" id="IPR019791">
    <property type="entry name" value="Haem_peroxidase_animal"/>
</dbReference>
<dbReference type="InterPro" id="IPR010255">
    <property type="entry name" value="Haem_peroxidase_sf"/>
</dbReference>
<dbReference type="InterPro" id="IPR037120">
    <property type="entry name" value="Haem_peroxidase_sf_animal"/>
</dbReference>
<dbReference type="InterPro" id="IPR050783">
    <property type="entry name" value="Oxylipin_biosynth_metab"/>
</dbReference>
<dbReference type="InterPro" id="IPR034812">
    <property type="entry name" value="Ppo-like_N"/>
</dbReference>
<dbReference type="PANTHER" id="PTHR11903:SF13">
    <property type="entry name" value="LINOLEATE 10R-LIPOXYGENASE"/>
    <property type="match status" value="1"/>
</dbReference>
<dbReference type="PANTHER" id="PTHR11903">
    <property type="entry name" value="PROSTAGLANDIN G/H SYNTHASE"/>
    <property type="match status" value="1"/>
</dbReference>
<dbReference type="Pfam" id="PF03098">
    <property type="entry name" value="An_peroxidase"/>
    <property type="match status" value="2"/>
</dbReference>
<dbReference type="Pfam" id="PF00067">
    <property type="entry name" value="p450"/>
    <property type="match status" value="1"/>
</dbReference>
<dbReference type="PRINTS" id="PR00457">
    <property type="entry name" value="ANPEROXIDASE"/>
</dbReference>
<dbReference type="SUPFAM" id="SSF48264">
    <property type="entry name" value="Cytochrome P450"/>
    <property type="match status" value="1"/>
</dbReference>
<dbReference type="SUPFAM" id="SSF48113">
    <property type="entry name" value="Heme-dependent peroxidases"/>
    <property type="match status" value="1"/>
</dbReference>
<dbReference type="PROSITE" id="PS50292">
    <property type="entry name" value="PEROXIDASE_3"/>
    <property type="match status" value="1"/>
</dbReference>